<evidence type="ECO:0000255" key="1">
    <source>
        <dbReference type="HAMAP-Rule" id="MF_01864"/>
    </source>
</evidence>
<evidence type="ECO:0000255" key="2">
    <source>
        <dbReference type="PROSITE-ProRule" id="PRU01266"/>
    </source>
</evidence>
<evidence type="ECO:0000305" key="3"/>
<dbReference type="EC" id="2.8.4.3" evidence="1"/>
<dbReference type="EMBL" id="CP000880">
    <property type="protein sequence ID" value="ABX22136.1"/>
    <property type="status" value="ALT_INIT"/>
    <property type="molecule type" value="Genomic_DNA"/>
</dbReference>
<dbReference type="SMR" id="A9MKB7"/>
<dbReference type="STRING" id="41514.SARI_02272"/>
<dbReference type="KEGG" id="ses:SARI_02272"/>
<dbReference type="HOGENOM" id="CLU_018697_2_0_6"/>
<dbReference type="Proteomes" id="UP000002084">
    <property type="component" value="Chromosome"/>
</dbReference>
<dbReference type="GO" id="GO:0005829">
    <property type="term" value="C:cytosol"/>
    <property type="evidence" value="ECO:0007669"/>
    <property type="project" value="TreeGrafter"/>
</dbReference>
<dbReference type="GO" id="GO:0051539">
    <property type="term" value="F:4 iron, 4 sulfur cluster binding"/>
    <property type="evidence" value="ECO:0007669"/>
    <property type="project" value="UniProtKB-UniRule"/>
</dbReference>
<dbReference type="GO" id="GO:0046872">
    <property type="term" value="F:metal ion binding"/>
    <property type="evidence" value="ECO:0007669"/>
    <property type="project" value="UniProtKB-KW"/>
</dbReference>
<dbReference type="GO" id="GO:0035597">
    <property type="term" value="F:N6-isopentenyladenosine methylthiotransferase activity"/>
    <property type="evidence" value="ECO:0007669"/>
    <property type="project" value="TreeGrafter"/>
</dbReference>
<dbReference type="CDD" id="cd01335">
    <property type="entry name" value="Radical_SAM"/>
    <property type="match status" value="1"/>
</dbReference>
<dbReference type="FunFam" id="3.40.50.12160:FF:000001">
    <property type="entry name" value="tRNA-2-methylthio-N(6)-dimethylallyladenosine synthase"/>
    <property type="match status" value="1"/>
</dbReference>
<dbReference type="FunFam" id="3.80.30.20:FF:000001">
    <property type="entry name" value="tRNA-2-methylthio-N(6)-dimethylallyladenosine synthase 2"/>
    <property type="match status" value="1"/>
</dbReference>
<dbReference type="Gene3D" id="3.40.50.12160">
    <property type="entry name" value="Methylthiotransferase, N-terminal domain"/>
    <property type="match status" value="1"/>
</dbReference>
<dbReference type="Gene3D" id="3.80.30.20">
    <property type="entry name" value="tm_1862 like domain"/>
    <property type="match status" value="1"/>
</dbReference>
<dbReference type="HAMAP" id="MF_01864">
    <property type="entry name" value="tRNA_metthiotr_MiaB"/>
    <property type="match status" value="1"/>
</dbReference>
<dbReference type="InterPro" id="IPR006638">
    <property type="entry name" value="Elp3/MiaA/NifB-like_rSAM"/>
</dbReference>
<dbReference type="InterPro" id="IPR005839">
    <property type="entry name" value="Methylthiotransferase"/>
</dbReference>
<dbReference type="InterPro" id="IPR020612">
    <property type="entry name" value="Methylthiotransferase_CS"/>
</dbReference>
<dbReference type="InterPro" id="IPR013848">
    <property type="entry name" value="Methylthiotransferase_N"/>
</dbReference>
<dbReference type="InterPro" id="IPR038135">
    <property type="entry name" value="Methylthiotransferase_N_sf"/>
</dbReference>
<dbReference type="InterPro" id="IPR006463">
    <property type="entry name" value="MiaB_methiolase"/>
</dbReference>
<dbReference type="InterPro" id="IPR007197">
    <property type="entry name" value="rSAM"/>
</dbReference>
<dbReference type="InterPro" id="IPR023404">
    <property type="entry name" value="rSAM_horseshoe"/>
</dbReference>
<dbReference type="InterPro" id="IPR002792">
    <property type="entry name" value="TRAM_dom"/>
</dbReference>
<dbReference type="NCBIfam" id="TIGR01574">
    <property type="entry name" value="miaB-methiolase"/>
    <property type="match status" value="1"/>
</dbReference>
<dbReference type="NCBIfam" id="TIGR00089">
    <property type="entry name" value="MiaB/RimO family radical SAM methylthiotransferase"/>
    <property type="match status" value="1"/>
</dbReference>
<dbReference type="PANTHER" id="PTHR43020">
    <property type="entry name" value="CDK5 REGULATORY SUBUNIT-ASSOCIATED PROTEIN 1"/>
    <property type="match status" value="1"/>
</dbReference>
<dbReference type="PANTHER" id="PTHR43020:SF2">
    <property type="entry name" value="MITOCHONDRIAL TRNA METHYLTHIOTRANSFERASE CDK5RAP1"/>
    <property type="match status" value="1"/>
</dbReference>
<dbReference type="Pfam" id="PF04055">
    <property type="entry name" value="Radical_SAM"/>
    <property type="match status" value="1"/>
</dbReference>
<dbReference type="Pfam" id="PF01938">
    <property type="entry name" value="TRAM"/>
    <property type="match status" value="1"/>
</dbReference>
<dbReference type="Pfam" id="PF00919">
    <property type="entry name" value="UPF0004"/>
    <property type="match status" value="1"/>
</dbReference>
<dbReference type="SFLD" id="SFLDF00273">
    <property type="entry name" value="(dimethylallyl)adenosine_tRNA"/>
    <property type="match status" value="1"/>
</dbReference>
<dbReference type="SFLD" id="SFLDG01082">
    <property type="entry name" value="B12-binding_domain_containing"/>
    <property type="match status" value="1"/>
</dbReference>
<dbReference type="SFLD" id="SFLDS00029">
    <property type="entry name" value="Radical_SAM"/>
    <property type="match status" value="1"/>
</dbReference>
<dbReference type="SMART" id="SM00729">
    <property type="entry name" value="Elp3"/>
    <property type="match status" value="1"/>
</dbReference>
<dbReference type="SUPFAM" id="SSF102114">
    <property type="entry name" value="Radical SAM enzymes"/>
    <property type="match status" value="1"/>
</dbReference>
<dbReference type="PROSITE" id="PS51449">
    <property type="entry name" value="MTTASE_N"/>
    <property type="match status" value="1"/>
</dbReference>
<dbReference type="PROSITE" id="PS01278">
    <property type="entry name" value="MTTASE_RADICAL"/>
    <property type="match status" value="1"/>
</dbReference>
<dbReference type="PROSITE" id="PS51918">
    <property type="entry name" value="RADICAL_SAM"/>
    <property type="match status" value="1"/>
</dbReference>
<dbReference type="PROSITE" id="PS50926">
    <property type="entry name" value="TRAM"/>
    <property type="match status" value="1"/>
</dbReference>
<sequence>MTKKLHIKTWGCQMNEYDSSKMADLLDATHGYQLTDVAEEADVLLLNTCSIREKAQEKVFHQLGRWRLLKEKNPDLIIGVGGCVASQEGEHIRQRAHYVDIIFGPQTLHRLPEMINSVRGDRSPVVDISFPEIEKFDRLPEPRAEGPTAFVSIMEGCNKYCTYCVVPYTRGEEVSRPSDDILFEIAQLAAQGVREVNLLGQNVNAWRGENYDGTTGTFADLLRLVAAIDGIDRIRFTTSHPIEFTDDIIEVYRDTPELVSFLHLPVQSGSDRVLNLMGRTHTALEYKAIIRKLRAARPDIQISSDFIVGFPGETSDDFEKTMKLIADVNFDMSYSFIFSARPGTPAADMVDDVPEEEKKQRLYILQERINQQAMAWSRRMLGSTQRILVEGTSRKNIMELSGRTENNRVVNFEGTPEMIGKFVDVEITDVYPNSLRGKVVRTEDEMGLRVAETPESVIARTRKENELGVGFYQP</sequence>
<name>MIAB_SALAR</name>
<protein>
    <recommendedName>
        <fullName evidence="1">tRNA-2-methylthio-N(6)-dimethylallyladenosine synthase</fullName>
        <ecNumber evidence="1">2.8.4.3</ecNumber>
    </recommendedName>
    <alternativeName>
        <fullName evidence="1">(Dimethylallyl)adenosine tRNA methylthiotransferase MiaB</fullName>
    </alternativeName>
    <alternativeName>
        <fullName evidence="1">tRNA-i(6)A37 methylthiotransferase</fullName>
    </alternativeName>
</protein>
<keyword id="KW-0004">4Fe-4S</keyword>
<keyword id="KW-0963">Cytoplasm</keyword>
<keyword id="KW-0408">Iron</keyword>
<keyword id="KW-0411">Iron-sulfur</keyword>
<keyword id="KW-0479">Metal-binding</keyword>
<keyword id="KW-1185">Reference proteome</keyword>
<keyword id="KW-0949">S-adenosyl-L-methionine</keyword>
<keyword id="KW-0808">Transferase</keyword>
<keyword id="KW-0819">tRNA processing</keyword>
<feature type="chain" id="PRO_0000374520" description="tRNA-2-methylthio-N(6)-dimethylallyladenosine synthase">
    <location>
        <begin position="1"/>
        <end position="474"/>
    </location>
</feature>
<feature type="domain" description="MTTase N-terminal" evidence="1">
    <location>
        <begin position="3"/>
        <end position="120"/>
    </location>
</feature>
<feature type="domain" description="Radical SAM core" evidence="2">
    <location>
        <begin position="143"/>
        <end position="375"/>
    </location>
</feature>
<feature type="domain" description="TRAM" evidence="1">
    <location>
        <begin position="378"/>
        <end position="441"/>
    </location>
</feature>
<feature type="binding site" evidence="1">
    <location>
        <position position="12"/>
    </location>
    <ligand>
        <name>[4Fe-4S] cluster</name>
        <dbReference type="ChEBI" id="CHEBI:49883"/>
        <label>1</label>
    </ligand>
</feature>
<feature type="binding site" evidence="1">
    <location>
        <position position="49"/>
    </location>
    <ligand>
        <name>[4Fe-4S] cluster</name>
        <dbReference type="ChEBI" id="CHEBI:49883"/>
        <label>1</label>
    </ligand>
</feature>
<feature type="binding site" evidence="1">
    <location>
        <position position="83"/>
    </location>
    <ligand>
        <name>[4Fe-4S] cluster</name>
        <dbReference type="ChEBI" id="CHEBI:49883"/>
        <label>1</label>
    </ligand>
</feature>
<feature type="binding site" evidence="1">
    <location>
        <position position="157"/>
    </location>
    <ligand>
        <name>[4Fe-4S] cluster</name>
        <dbReference type="ChEBI" id="CHEBI:49883"/>
        <label>2</label>
        <note>4Fe-4S-S-AdoMet</note>
    </ligand>
</feature>
<feature type="binding site" evidence="1">
    <location>
        <position position="161"/>
    </location>
    <ligand>
        <name>[4Fe-4S] cluster</name>
        <dbReference type="ChEBI" id="CHEBI:49883"/>
        <label>2</label>
        <note>4Fe-4S-S-AdoMet</note>
    </ligand>
</feature>
<feature type="binding site" evidence="1">
    <location>
        <position position="164"/>
    </location>
    <ligand>
        <name>[4Fe-4S] cluster</name>
        <dbReference type="ChEBI" id="CHEBI:49883"/>
        <label>2</label>
        <note>4Fe-4S-S-AdoMet</note>
    </ligand>
</feature>
<reference key="1">
    <citation type="submission" date="2007-11" db="EMBL/GenBank/DDBJ databases">
        <authorList>
            <consortium name="The Salmonella enterica serovar Arizonae Genome Sequencing Project"/>
            <person name="McClelland M."/>
            <person name="Sanderson E.K."/>
            <person name="Porwollik S."/>
            <person name="Spieth J."/>
            <person name="Clifton W.S."/>
            <person name="Fulton R."/>
            <person name="Chunyan W."/>
            <person name="Wollam A."/>
            <person name="Shah N."/>
            <person name="Pepin K."/>
            <person name="Bhonagiri V."/>
            <person name="Nash W."/>
            <person name="Johnson M."/>
            <person name="Thiruvilangam P."/>
            <person name="Wilson R."/>
        </authorList>
    </citation>
    <scope>NUCLEOTIDE SEQUENCE [LARGE SCALE GENOMIC DNA]</scope>
    <source>
        <strain>ATCC BAA-731 / CDC346-86 / RSK2980</strain>
    </source>
</reference>
<organism>
    <name type="scientific">Salmonella arizonae (strain ATCC BAA-731 / CDC346-86 / RSK2980)</name>
    <dbReference type="NCBI Taxonomy" id="41514"/>
    <lineage>
        <taxon>Bacteria</taxon>
        <taxon>Pseudomonadati</taxon>
        <taxon>Pseudomonadota</taxon>
        <taxon>Gammaproteobacteria</taxon>
        <taxon>Enterobacterales</taxon>
        <taxon>Enterobacteriaceae</taxon>
        <taxon>Salmonella</taxon>
    </lineage>
</organism>
<comment type="function">
    <text evidence="1">Catalyzes the methylthiolation of N6-(dimethylallyl)adenosine (i(6)A), leading to the formation of 2-methylthio-N6-(dimethylallyl)adenosine (ms(2)i(6)A) at position 37 in tRNAs that read codons beginning with uridine.</text>
</comment>
<comment type="catalytic activity">
    <reaction evidence="1">
        <text>N(6)-dimethylallyladenosine(37) in tRNA + (sulfur carrier)-SH + AH2 + 2 S-adenosyl-L-methionine = 2-methylsulfanyl-N(6)-dimethylallyladenosine(37) in tRNA + (sulfur carrier)-H + 5'-deoxyadenosine + L-methionine + A + S-adenosyl-L-homocysteine + 2 H(+)</text>
        <dbReference type="Rhea" id="RHEA:37067"/>
        <dbReference type="Rhea" id="RHEA-COMP:10375"/>
        <dbReference type="Rhea" id="RHEA-COMP:10376"/>
        <dbReference type="Rhea" id="RHEA-COMP:14737"/>
        <dbReference type="Rhea" id="RHEA-COMP:14739"/>
        <dbReference type="ChEBI" id="CHEBI:13193"/>
        <dbReference type="ChEBI" id="CHEBI:15378"/>
        <dbReference type="ChEBI" id="CHEBI:17319"/>
        <dbReference type="ChEBI" id="CHEBI:17499"/>
        <dbReference type="ChEBI" id="CHEBI:29917"/>
        <dbReference type="ChEBI" id="CHEBI:57844"/>
        <dbReference type="ChEBI" id="CHEBI:57856"/>
        <dbReference type="ChEBI" id="CHEBI:59789"/>
        <dbReference type="ChEBI" id="CHEBI:64428"/>
        <dbReference type="ChEBI" id="CHEBI:74415"/>
        <dbReference type="ChEBI" id="CHEBI:74417"/>
        <dbReference type="EC" id="2.8.4.3"/>
    </reaction>
</comment>
<comment type="cofactor">
    <cofactor evidence="1">
        <name>[4Fe-4S] cluster</name>
        <dbReference type="ChEBI" id="CHEBI:49883"/>
    </cofactor>
    <text evidence="1">Binds 2 [4Fe-4S] clusters. One cluster is coordinated with 3 cysteines and an exchangeable S-adenosyl-L-methionine.</text>
</comment>
<comment type="subunit">
    <text evidence="1">Monomer.</text>
</comment>
<comment type="subcellular location">
    <subcellularLocation>
        <location evidence="1">Cytoplasm</location>
    </subcellularLocation>
</comment>
<comment type="similarity">
    <text evidence="1">Belongs to the methylthiotransferase family. MiaB subfamily.</text>
</comment>
<comment type="sequence caution" evidence="3">
    <conflict type="erroneous initiation">
        <sequence resource="EMBL-CDS" id="ABX22136"/>
    </conflict>
</comment>
<accession>A9MKB7</accession>
<gene>
    <name evidence="1" type="primary">miaB</name>
    <name type="ordered locus">SARI_02272</name>
</gene>
<proteinExistence type="inferred from homology"/>